<accession>Q86VM9</accession>
<accession>Q96DG4</accession>
<accession>Q96MP7</accession>
<protein>
    <recommendedName>
        <fullName evidence="9">Zinc finger CCCH domain-containing protein 18</fullName>
    </recommendedName>
    <alternativeName>
        <fullName>Nuclear protein NHN1</fullName>
    </alternativeName>
</protein>
<keyword id="KW-0007">Acetylation</keyword>
<keyword id="KW-0175">Coiled coil</keyword>
<keyword id="KW-1017">Isopeptide bond</keyword>
<keyword id="KW-0479">Metal-binding</keyword>
<keyword id="KW-0539">Nucleus</keyword>
<keyword id="KW-0597">Phosphoprotein</keyword>
<keyword id="KW-1267">Proteomics identification</keyword>
<keyword id="KW-1185">Reference proteome</keyword>
<keyword id="KW-0832">Ubl conjugation</keyword>
<keyword id="KW-0862">Zinc</keyword>
<keyword id="KW-0863">Zinc-finger</keyword>
<proteinExistence type="evidence at protein level"/>
<evidence type="ECO:0000250" key="1"/>
<evidence type="ECO:0000250" key="2">
    <source>
        <dbReference type="UniProtKB" id="Q0P678"/>
    </source>
</evidence>
<evidence type="ECO:0000250" key="3">
    <source>
        <dbReference type="UniProtKB" id="Q6TQE1"/>
    </source>
</evidence>
<evidence type="ECO:0000255" key="4"/>
<evidence type="ECO:0000255" key="5">
    <source>
        <dbReference type="PROSITE-ProRule" id="PRU00723"/>
    </source>
</evidence>
<evidence type="ECO:0000256" key="6">
    <source>
        <dbReference type="SAM" id="MobiDB-lite"/>
    </source>
</evidence>
<evidence type="ECO:0000269" key="7">
    <source>
    </source>
</evidence>
<evidence type="ECO:0000269" key="8">
    <source>
    </source>
</evidence>
<evidence type="ECO:0000305" key="9"/>
<evidence type="ECO:0000312" key="10">
    <source>
        <dbReference type="HGNC" id="HGNC:25091"/>
    </source>
</evidence>
<evidence type="ECO:0007744" key="11">
    <source>
    </source>
</evidence>
<evidence type="ECO:0007744" key="12">
    <source>
    </source>
</evidence>
<evidence type="ECO:0007744" key="13">
    <source>
    </source>
</evidence>
<evidence type="ECO:0007744" key="14">
    <source>
    </source>
</evidence>
<evidence type="ECO:0007744" key="15">
    <source>
    </source>
</evidence>
<evidence type="ECO:0007744" key="16">
    <source>
    </source>
</evidence>
<evidence type="ECO:0007744" key="17">
    <source>
    </source>
</evidence>
<evidence type="ECO:0007744" key="18">
    <source>
    </source>
</evidence>
<evidence type="ECO:0007744" key="19">
    <source>
    </source>
</evidence>
<evidence type="ECO:0007744" key="20">
    <source>
    </source>
</evidence>
<evidence type="ECO:0007744" key="21">
    <source>
    </source>
</evidence>
<evidence type="ECO:0007744" key="22">
    <source>
    </source>
</evidence>
<evidence type="ECO:0007744" key="23">
    <source>
    </source>
</evidence>
<dbReference type="EMBL" id="AK056632">
    <property type="protein sequence ID" value="BAB71237.1"/>
    <property type="status" value="ALT_SEQ"/>
    <property type="molecule type" value="mRNA"/>
</dbReference>
<dbReference type="EMBL" id="AC116552">
    <property type="status" value="NOT_ANNOTATED_CDS"/>
    <property type="molecule type" value="Genomic_DNA"/>
</dbReference>
<dbReference type="EMBL" id="BC001584">
    <property type="protein sequence ID" value="AAH01584.1"/>
    <property type="molecule type" value="mRNA"/>
</dbReference>
<dbReference type="EMBL" id="BC050463">
    <property type="protein sequence ID" value="AAH50463.1"/>
    <property type="molecule type" value="mRNA"/>
</dbReference>
<dbReference type="CCDS" id="CCDS10967.1"/>
<dbReference type="RefSeq" id="NP_001281269.1">
    <property type="nucleotide sequence ID" value="NM_001294340.1"/>
</dbReference>
<dbReference type="RefSeq" id="NP_653205.3">
    <property type="nucleotide sequence ID" value="NM_144604.3"/>
</dbReference>
<dbReference type="BioGRID" id="125858">
    <property type="interactions" value="892"/>
</dbReference>
<dbReference type="CORUM" id="Q86VM9"/>
<dbReference type="FunCoup" id="Q86VM9">
    <property type="interactions" value="2665"/>
</dbReference>
<dbReference type="IntAct" id="Q86VM9">
    <property type="interactions" value="316"/>
</dbReference>
<dbReference type="MINT" id="Q86VM9"/>
<dbReference type="STRING" id="9606.ENSP00000416951"/>
<dbReference type="GlyGen" id="Q86VM9">
    <property type="glycosylation" value="6 sites, 3 N-linked glycans (3 sites), 1 O-linked glycan (1 site)"/>
</dbReference>
<dbReference type="iPTMnet" id="Q86VM9"/>
<dbReference type="PhosphoSitePlus" id="Q86VM9"/>
<dbReference type="BioMuta" id="ZC3H18"/>
<dbReference type="DMDM" id="269849528"/>
<dbReference type="jPOST" id="Q86VM9"/>
<dbReference type="MassIVE" id="Q86VM9"/>
<dbReference type="PaxDb" id="9606-ENSP00000416951"/>
<dbReference type="PeptideAtlas" id="Q86VM9"/>
<dbReference type="Pumba" id="Q86VM9"/>
<dbReference type="Antibodypedia" id="30727">
    <property type="antibodies" value="26 antibodies from 12 providers"/>
</dbReference>
<dbReference type="DNASU" id="124245"/>
<dbReference type="Ensembl" id="ENST00000301011.10">
    <property type="protein sequence ID" value="ENSP00000301011.5"/>
    <property type="gene ID" value="ENSG00000158545.16"/>
</dbReference>
<dbReference type="GeneID" id="124245"/>
<dbReference type="KEGG" id="hsa:124245"/>
<dbReference type="MANE-Select" id="ENST00000301011.10">
    <property type="protein sequence ID" value="ENSP00000301011.5"/>
    <property type="RefSeq nucleotide sequence ID" value="NM_144604.4"/>
    <property type="RefSeq protein sequence ID" value="NP_653205.3"/>
</dbReference>
<dbReference type="UCSC" id="uc002fky.4">
    <property type="organism name" value="human"/>
</dbReference>
<dbReference type="AGR" id="HGNC:25091"/>
<dbReference type="CTD" id="124245"/>
<dbReference type="DisGeNET" id="124245"/>
<dbReference type="GeneCards" id="ZC3H18"/>
<dbReference type="HGNC" id="HGNC:25091">
    <property type="gene designation" value="ZC3H18"/>
</dbReference>
<dbReference type="HPA" id="ENSG00000158545">
    <property type="expression patterns" value="Low tissue specificity"/>
</dbReference>
<dbReference type="neXtProt" id="NX_Q86VM9"/>
<dbReference type="OpenTargets" id="ENSG00000158545"/>
<dbReference type="PharmGKB" id="PA162409533"/>
<dbReference type="VEuPathDB" id="HostDB:ENSG00000158545"/>
<dbReference type="eggNOG" id="ENOG502R7WP">
    <property type="taxonomic scope" value="Eukaryota"/>
</dbReference>
<dbReference type="GeneTree" id="ENSGT00730000111190"/>
<dbReference type="HOGENOM" id="CLU_012901_0_0_1"/>
<dbReference type="InParanoid" id="Q86VM9"/>
<dbReference type="OMA" id="PYRNYRR"/>
<dbReference type="OrthoDB" id="10072532at2759"/>
<dbReference type="PAN-GO" id="Q86VM9">
    <property type="GO annotations" value="0 GO annotations based on evolutionary models"/>
</dbReference>
<dbReference type="PhylomeDB" id="Q86VM9"/>
<dbReference type="TreeFam" id="TF327301"/>
<dbReference type="PathwayCommons" id="Q86VM9"/>
<dbReference type="SignaLink" id="Q86VM9"/>
<dbReference type="BioGRID-ORCS" id="124245">
    <property type="hits" value="482 hits in 1183 CRISPR screens"/>
</dbReference>
<dbReference type="ChiTaRS" id="ZC3H18">
    <property type="organism name" value="human"/>
</dbReference>
<dbReference type="GenomeRNAi" id="124245"/>
<dbReference type="Pharos" id="Q86VM9">
    <property type="development level" value="Tdark"/>
</dbReference>
<dbReference type="PRO" id="PR:Q86VM9"/>
<dbReference type="Proteomes" id="UP000005640">
    <property type="component" value="Chromosome 16"/>
</dbReference>
<dbReference type="RNAct" id="Q86VM9">
    <property type="molecule type" value="protein"/>
</dbReference>
<dbReference type="Bgee" id="ENSG00000158545">
    <property type="expression patterns" value="Expressed in sural nerve and 167 other cell types or tissues"/>
</dbReference>
<dbReference type="ExpressionAtlas" id="Q86VM9">
    <property type="expression patterns" value="baseline and differential"/>
</dbReference>
<dbReference type="GO" id="GO:0016607">
    <property type="term" value="C:nuclear speck"/>
    <property type="evidence" value="ECO:0000314"/>
    <property type="project" value="HPA"/>
</dbReference>
<dbReference type="GO" id="GO:0032991">
    <property type="term" value="C:protein-containing complex"/>
    <property type="evidence" value="ECO:0000314"/>
    <property type="project" value="CAFA"/>
</dbReference>
<dbReference type="GO" id="GO:1990904">
    <property type="term" value="C:ribonucleoprotein complex"/>
    <property type="evidence" value="ECO:0000314"/>
    <property type="project" value="FlyBase"/>
</dbReference>
<dbReference type="GO" id="GO:0140262">
    <property type="term" value="F:mRNA cap binding complex binding"/>
    <property type="evidence" value="ECO:0000314"/>
    <property type="project" value="FlyBase"/>
</dbReference>
<dbReference type="GO" id="GO:0030674">
    <property type="term" value="F:protein-macromolecule adaptor activity"/>
    <property type="evidence" value="ECO:0000314"/>
    <property type="project" value="FlyBase"/>
</dbReference>
<dbReference type="GO" id="GO:0003723">
    <property type="term" value="F:RNA binding"/>
    <property type="evidence" value="ECO:0007005"/>
    <property type="project" value="UniProtKB"/>
</dbReference>
<dbReference type="GO" id="GO:0008270">
    <property type="term" value="F:zinc ion binding"/>
    <property type="evidence" value="ECO:0007669"/>
    <property type="project" value="UniProtKB-KW"/>
</dbReference>
<dbReference type="GO" id="GO:0050779">
    <property type="term" value="P:RNA destabilization"/>
    <property type="evidence" value="ECO:0000315"/>
    <property type="project" value="FlyBase"/>
</dbReference>
<dbReference type="Gene3D" id="4.10.1000.10">
    <property type="entry name" value="Zinc finger, CCCH-type"/>
    <property type="match status" value="1"/>
</dbReference>
<dbReference type="InterPro" id="IPR052647">
    <property type="entry name" value="Zinc_finger_CCCH-type"/>
</dbReference>
<dbReference type="InterPro" id="IPR041367">
    <property type="entry name" value="Znf-CCCH_4"/>
</dbReference>
<dbReference type="InterPro" id="IPR000571">
    <property type="entry name" value="Znf_CCCH"/>
</dbReference>
<dbReference type="InterPro" id="IPR036855">
    <property type="entry name" value="Znf_CCCH_sf"/>
</dbReference>
<dbReference type="PANTHER" id="PTHR46582">
    <property type="entry name" value="ZINC FINGER CCCH DOMAIN-CONTAINING PROTEIN 18"/>
    <property type="match status" value="1"/>
</dbReference>
<dbReference type="PANTHER" id="PTHR46582:SF1">
    <property type="entry name" value="ZINC FINGER CCCH DOMAIN-CONTAINING PROTEIN 18"/>
    <property type="match status" value="1"/>
</dbReference>
<dbReference type="Pfam" id="PF18044">
    <property type="entry name" value="zf-CCCH_4"/>
    <property type="match status" value="1"/>
</dbReference>
<dbReference type="SMART" id="SM00356">
    <property type="entry name" value="ZnF_C3H1"/>
    <property type="match status" value="1"/>
</dbReference>
<dbReference type="SUPFAM" id="SSF90229">
    <property type="entry name" value="CCCH zinc finger"/>
    <property type="match status" value="1"/>
</dbReference>
<dbReference type="PROSITE" id="PS50103">
    <property type="entry name" value="ZF_C3H1"/>
    <property type="match status" value="1"/>
</dbReference>
<name>ZCH18_HUMAN</name>
<sequence>MDVAESPERDPHSPEDEEQPQGLSDDDILRDSGSDQDLDGAGVRASDLEDEESAARGPSQEEEDNHSDEEDRASEPKSQDQDSEVNELSRGPTSSPCEEEGDEGEEDRTSDLRDEASSVTRELDEHELDYDEEVPEEPAPAVQEDEAEKAGAEDDEEKGEGTPREEGKAGVQSVGEKESLEAAKEKKKEDDDGEIDDGEIDDDDLEEGEVKDPSDRKVRPRPTCRFFMKGNCTWGMNCRFIHPGVNDKGNYSLITKADPFPPNGAPPLGPHPLMPANPWGGPVVDEILPPPPPEPPTESAWERGLRHAKEVLKKATIRKEQEPDFEEKRFTVTIGEDEREFDKENEVFRDWNSRIPRDVRDTVLEPYADPYYDYEIERFWRGGQYENFRVQYTETEPYHNYRERERERERENRQRERERERERDRERERRQRERERERERERDKERQRRKEEWERERAKRDEKDRQHRDRDREKEREKEKGKPKPRSPQPPSRQAEPPKKEAATTGPQVKRADEWKDPWRRSKSPKKKLGVSVSPSRARRRRKTSASSASASNSSRSSSRSSSYSGSGSSRSRSRSSSYSSYSSRSSRHSSFSGSRSRSRSFSSSPSPSPTPSPHRPSIRTKGEPAPPPGKAGEKSVKKPAPPPAPPQATKTTAPVPEPTKPGDPREARRKERPARTPPRRRTLSGSGSGSGSSYSGSSSRSRSLSVSSVSSVSSATSSSSSAHSVDSEDMYADLASPVSSASSRSPAPAQTRKEKGKSKKEDGVKEEKRKRDSSTQPPKSAKPPAGGKSSQQPSTPQQAPPGQPQQGTFVAHKEIKLTLLNKAADKGSRKRYEPSDKDRQSPPPAKRPNTSPDRGSRDRKSGGRLGSPKPERQRGQNSKAPAAPADRKRQLSPQSKSSSKVTSVPGKASDPGAASTKSGKASTLSRREELLKQLKAVEDAIARKRAKIPGKA</sequence>
<comment type="subunit">
    <text evidence="8">Interacts with ZFC3H1 in a RNase-insensitive manner.</text>
</comment>
<comment type="interaction">
    <interactant intactId="EBI-1045965">
        <id>Q86VM9</id>
    </interactant>
    <interactant intactId="EBI-706637">
        <id>Q15554</id>
        <label>TERF2</label>
    </interactant>
    <organismsDiffer>false</organismsDiffer>
    <experiments>2</experiments>
</comment>
<comment type="interaction">
    <interactant intactId="EBI-1045965">
        <id>Q86VM9</id>
    </interactant>
    <interactant intactId="EBI-25475850">
        <id>P0DTC4</id>
        <label>E</label>
    </interactant>
    <organismsDiffer>true</organismsDiffer>
    <experiments>3</experiments>
</comment>
<comment type="subcellular location">
    <subcellularLocation>
        <location evidence="1">Nucleus</location>
    </subcellularLocation>
</comment>
<comment type="sequence caution" evidence="9">
    <conflict type="miscellaneous discrepancy">
        <sequence resource="EMBL-CDS" id="BAB71237"/>
    </conflict>
    <text>Non-canonical splice intron-exon junction.</text>
</comment>
<reference key="1">
    <citation type="journal article" date="2004" name="Nat. Genet.">
        <title>Complete sequencing and characterization of 21,243 full-length human cDNAs.</title>
        <authorList>
            <person name="Ota T."/>
            <person name="Suzuki Y."/>
            <person name="Nishikawa T."/>
            <person name="Otsuki T."/>
            <person name="Sugiyama T."/>
            <person name="Irie R."/>
            <person name="Wakamatsu A."/>
            <person name="Hayashi K."/>
            <person name="Sato H."/>
            <person name="Nagai K."/>
            <person name="Kimura K."/>
            <person name="Makita H."/>
            <person name="Sekine M."/>
            <person name="Obayashi M."/>
            <person name="Nishi T."/>
            <person name="Shibahara T."/>
            <person name="Tanaka T."/>
            <person name="Ishii S."/>
            <person name="Yamamoto J."/>
            <person name="Saito K."/>
            <person name="Kawai Y."/>
            <person name="Isono Y."/>
            <person name="Nakamura Y."/>
            <person name="Nagahari K."/>
            <person name="Murakami K."/>
            <person name="Yasuda T."/>
            <person name="Iwayanagi T."/>
            <person name="Wagatsuma M."/>
            <person name="Shiratori A."/>
            <person name="Sudo H."/>
            <person name="Hosoiri T."/>
            <person name="Kaku Y."/>
            <person name="Kodaira H."/>
            <person name="Kondo H."/>
            <person name="Sugawara M."/>
            <person name="Takahashi M."/>
            <person name="Kanda K."/>
            <person name="Yokoi T."/>
            <person name="Furuya T."/>
            <person name="Kikkawa E."/>
            <person name="Omura Y."/>
            <person name="Abe K."/>
            <person name="Kamihara K."/>
            <person name="Katsuta N."/>
            <person name="Sato K."/>
            <person name="Tanikawa M."/>
            <person name="Yamazaki M."/>
            <person name="Ninomiya K."/>
            <person name="Ishibashi T."/>
            <person name="Yamashita H."/>
            <person name="Murakawa K."/>
            <person name="Fujimori K."/>
            <person name="Tanai H."/>
            <person name="Kimata M."/>
            <person name="Watanabe M."/>
            <person name="Hiraoka S."/>
            <person name="Chiba Y."/>
            <person name="Ishida S."/>
            <person name="Ono Y."/>
            <person name="Takiguchi S."/>
            <person name="Watanabe S."/>
            <person name="Yosida M."/>
            <person name="Hotuta T."/>
            <person name="Kusano J."/>
            <person name="Kanehori K."/>
            <person name="Takahashi-Fujii A."/>
            <person name="Hara H."/>
            <person name="Tanase T.-O."/>
            <person name="Nomura Y."/>
            <person name="Togiya S."/>
            <person name="Komai F."/>
            <person name="Hara R."/>
            <person name="Takeuchi K."/>
            <person name="Arita M."/>
            <person name="Imose N."/>
            <person name="Musashino K."/>
            <person name="Yuuki H."/>
            <person name="Oshima A."/>
            <person name="Sasaki N."/>
            <person name="Aotsuka S."/>
            <person name="Yoshikawa Y."/>
            <person name="Matsunawa H."/>
            <person name="Ichihara T."/>
            <person name="Shiohata N."/>
            <person name="Sano S."/>
            <person name="Moriya S."/>
            <person name="Momiyama H."/>
            <person name="Satoh N."/>
            <person name="Takami S."/>
            <person name="Terashima Y."/>
            <person name="Suzuki O."/>
            <person name="Nakagawa S."/>
            <person name="Senoh A."/>
            <person name="Mizoguchi H."/>
            <person name="Goto Y."/>
            <person name="Shimizu F."/>
            <person name="Wakebe H."/>
            <person name="Hishigaki H."/>
            <person name="Watanabe T."/>
            <person name="Sugiyama A."/>
            <person name="Takemoto M."/>
            <person name="Kawakami B."/>
            <person name="Yamazaki M."/>
            <person name="Watanabe K."/>
            <person name="Kumagai A."/>
            <person name="Itakura S."/>
            <person name="Fukuzumi Y."/>
            <person name="Fujimori Y."/>
            <person name="Komiyama M."/>
            <person name="Tashiro H."/>
            <person name="Tanigami A."/>
            <person name="Fujiwara T."/>
            <person name="Ono T."/>
            <person name="Yamada K."/>
            <person name="Fujii Y."/>
            <person name="Ozaki K."/>
            <person name="Hirao M."/>
            <person name="Ohmori Y."/>
            <person name="Kawabata A."/>
            <person name="Hikiji T."/>
            <person name="Kobatake N."/>
            <person name="Inagaki H."/>
            <person name="Ikema Y."/>
            <person name="Okamoto S."/>
            <person name="Okitani R."/>
            <person name="Kawakami T."/>
            <person name="Noguchi S."/>
            <person name="Itoh T."/>
            <person name="Shigeta K."/>
            <person name="Senba T."/>
            <person name="Matsumura K."/>
            <person name="Nakajima Y."/>
            <person name="Mizuno T."/>
            <person name="Morinaga M."/>
            <person name="Sasaki M."/>
            <person name="Togashi T."/>
            <person name="Oyama M."/>
            <person name="Hata H."/>
            <person name="Watanabe M."/>
            <person name="Komatsu T."/>
            <person name="Mizushima-Sugano J."/>
            <person name="Satoh T."/>
            <person name="Shirai Y."/>
            <person name="Takahashi Y."/>
            <person name="Nakagawa K."/>
            <person name="Okumura K."/>
            <person name="Nagase T."/>
            <person name="Nomura N."/>
            <person name="Kikuchi H."/>
            <person name="Masuho Y."/>
            <person name="Yamashita R."/>
            <person name="Nakai K."/>
            <person name="Yada T."/>
            <person name="Nakamura Y."/>
            <person name="Ohara O."/>
            <person name="Isogai T."/>
            <person name="Sugano S."/>
        </authorList>
    </citation>
    <scope>NUCLEOTIDE SEQUENCE [LARGE SCALE MRNA]</scope>
    <source>
        <tissue>Brain</tissue>
    </source>
</reference>
<reference key="2">
    <citation type="journal article" date="2004" name="Nature">
        <title>The sequence and analysis of duplication-rich human chromosome 16.</title>
        <authorList>
            <person name="Martin J."/>
            <person name="Han C."/>
            <person name="Gordon L.A."/>
            <person name="Terry A."/>
            <person name="Prabhakar S."/>
            <person name="She X."/>
            <person name="Xie G."/>
            <person name="Hellsten U."/>
            <person name="Chan Y.M."/>
            <person name="Altherr M."/>
            <person name="Couronne O."/>
            <person name="Aerts A."/>
            <person name="Bajorek E."/>
            <person name="Black S."/>
            <person name="Blumer H."/>
            <person name="Branscomb E."/>
            <person name="Brown N.C."/>
            <person name="Bruno W.J."/>
            <person name="Buckingham J.M."/>
            <person name="Callen D.F."/>
            <person name="Campbell C.S."/>
            <person name="Campbell M.L."/>
            <person name="Campbell E.W."/>
            <person name="Caoile C."/>
            <person name="Challacombe J.F."/>
            <person name="Chasteen L.A."/>
            <person name="Chertkov O."/>
            <person name="Chi H.C."/>
            <person name="Christensen M."/>
            <person name="Clark L.M."/>
            <person name="Cohn J.D."/>
            <person name="Denys M."/>
            <person name="Detter J.C."/>
            <person name="Dickson M."/>
            <person name="Dimitrijevic-Bussod M."/>
            <person name="Escobar J."/>
            <person name="Fawcett J.J."/>
            <person name="Flowers D."/>
            <person name="Fotopulos D."/>
            <person name="Glavina T."/>
            <person name="Gomez M."/>
            <person name="Gonzales E."/>
            <person name="Goodstein D."/>
            <person name="Goodwin L.A."/>
            <person name="Grady D.L."/>
            <person name="Grigoriev I."/>
            <person name="Groza M."/>
            <person name="Hammon N."/>
            <person name="Hawkins T."/>
            <person name="Haydu L."/>
            <person name="Hildebrand C.E."/>
            <person name="Huang W."/>
            <person name="Israni S."/>
            <person name="Jett J."/>
            <person name="Jewett P.B."/>
            <person name="Kadner K."/>
            <person name="Kimball H."/>
            <person name="Kobayashi A."/>
            <person name="Krawczyk M.-C."/>
            <person name="Leyba T."/>
            <person name="Longmire J.L."/>
            <person name="Lopez F."/>
            <person name="Lou Y."/>
            <person name="Lowry S."/>
            <person name="Ludeman T."/>
            <person name="Manohar C.F."/>
            <person name="Mark G.A."/>
            <person name="McMurray K.L."/>
            <person name="Meincke L.J."/>
            <person name="Morgan J."/>
            <person name="Moyzis R.K."/>
            <person name="Mundt M.O."/>
            <person name="Munk A.C."/>
            <person name="Nandkeshwar R.D."/>
            <person name="Pitluck S."/>
            <person name="Pollard M."/>
            <person name="Predki P."/>
            <person name="Parson-Quintana B."/>
            <person name="Ramirez L."/>
            <person name="Rash S."/>
            <person name="Retterer J."/>
            <person name="Ricke D.O."/>
            <person name="Robinson D.L."/>
            <person name="Rodriguez A."/>
            <person name="Salamov A."/>
            <person name="Saunders E.H."/>
            <person name="Scott D."/>
            <person name="Shough T."/>
            <person name="Stallings R.L."/>
            <person name="Stalvey M."/>
            <person name="Sutherland R.D."/>
            <person name="Tapia R."/>
            <person name="Tesmer J.G."/>
            <person name="Thayer N."/>
            <person name="Thompson L.S."/>
            <person name="Tice H."/>
            <person name="Torney D.C."/>
            <person name="Tran-Gyamfi M."/>
            <person name="Tsai M."/>
            <person name="Ulanovsky L.E."/>
            <person name="Ustaszewska A."/>
            <person name="Vo N."/>
            <person name="White P.S."/>
            <person name="Williams A.L."/>
            <person name="Wills P.L."/>
            <person name="Wu J.-R."/>
            <person name="Wu K."/>
            <person name="Yang J."/>
            <person name="DeJong P."/>
            <person name="Bruce D."/>
            <person name="Doggett N.A."/>
            <person name="Deaven L."/>
            <person name="Schmutz J."/>
            <person name="Grimwood J."/>
            <person name="Richardson P."/>
            <person name="Rokhsar D.S."/>
            <person name="Eichler E.E."/>
            <person name="Gilna P."/>
            <person name="Lucas S.M."/>
            <person name="Myers R.M."/>
            <person name="Rubin E.M."/>
            <person name="Pennacchio L.A."/>
        </authorList>
    </citation>
    <scope>NUCLEOTIDE SEQUENCE [LARGE SCALE GENOMIC DNA]</scope>
</reference>
<reference key="3">
    <citation type="journal article" date="2004" name="Genome Res.">
        <title>The status, quality, and expansion of the NIH full-length cDNA project: the Mammalian Gene Collection (MGC).</title>
        <authorList>
            <consortium name="The MGC Project Team"/>
        </authorList>
    </citation>
    <scope>NUCLEOTIDE SEQUENCE [LARGE SCALE MRNA]</scope>
    <scope>VARIANT HIS-440</scope>
    <source>
        <tissue>Cervix</tissue>
        <tissue>Testis</tissue>
    </source>
</reference>
<reference key="4">
    <citation type="journal article" date="2006" name="Cell">
        <title>Global, in vivo, and site-specific phosphorylation dynamics in signaling networks.</title>
        <authorList>
            <person name="Olsen J.V."/>
            <person name="Blagoev B."/>
            <person name="Gnad F."/>
            <person name="Macek B."/>
            <person name="Kumar C."/>
            <person name="Mortensen P."/>
            <person name="Mann M."/>
        </authorList>
    </citation>
    <scope>PHOSPHORYLATION [LARGE SCALE ANALYSIS] AT SER-46; SER-78; SER-83; SER-868 AND SER-893</scope>
    <scope>IDENTIFICATION BY MASS SPECTROMETRY [LARGE SCALE ANALYSIS]</scope>
    <source>
        <tissue>Cervix carcinoma</tissue>
    </source>
</reference>
<reference key="5">
    <citation type="journal article" date="2006" name="Nat. Biotechnol.">
        <title>A probability-based approach for high-throughput protein phosphorylation analysis and site localization.</title>
        <authorList>
            <person name="Beausoleil S.A."/>
            <person name="Villen J."/>
            <person name="Gerber S.A."/>
            <person name="Rush J."/>
            <person name="Gygi S.P."/>
        </authorList>
    </citation>
    <scope>PHOSPHORYLATION [LARGE SCALE ANALYSIS] AT SER-532 AND SER-534</scope>
    <scope>IDENTIFICATION BY MASS SPECTROMETRY [LARGE SCALE ANALYSIS]</scope>
    <source>
        <tissue>Cervix carcinoma</tissue>
    </source>
</reference>
<reference key="6">
    <citation type="journal article" date="2008" name="J. Proteome Res.">
        <title>Combining protein-based IMAC, peptide-based IMAC, and MudPIT for efficient phosphoproteomic analysis.</title>
        <authorList>
            <person name="Cantin G.T."/>
            <person name="Yi W."/>
            <person name="Lu B."/>
            <person name="Park S.K."/>
            <person name="Xu T."/>
            <person name="Lee J.-D."/>
            <person name="Yates J.R. III"/>
        </authorList>
    </citation>
    <scope>IDENTIFICATION BY MASS SPECTROMETRY [LARGE SCALE ANALYSIS]</scope>
    <source>
        <tissue>Cervix carcinoma</tissue>
    </source>
</reference>
<reference key="7">
    <citation type="journal article" date="2008" name="J. Proteome Res.">
        <title>Phosphorylation analysis of primary human T lymphocytes using sequential IMAC and titanium oxide enrichment.</title>
        <authorList>
            <person name="Carrascal M."/>
            <person name="Ovelleiro D."/>
            <person name="Casas V."/>
            <person name="Gay M."/>
            <person name="Abian J."/>
        </authorList>
    </citation>
    <scope>PHOSPHORYLATION [LARGE SCALE ANALYSIS] AT SER-46</scope>
    <scope>IDENTIFICATION BY MASS SPECTROMETRY [LARGE SCALE ANALYSIS]</scope>
    <source>
        <tissue>T-cell</tissue>
    </source>
</reference>
<reference key="8">
    <citation type="journal article" date="2008" name="Mol. Cell">
        <title>Kinase-selective enrichment enables quantitative phosphoproteomics of the kinome across the cell cycle.</title>
        <authorList>
            <person name="Daub H."/>
            <person name="Olsen J.V."/>
            <person name="Bairlein M."/>
            <person name="Gnad F."/>
            <person name="Oppermann F.S."/>
            <person name="Korner R."/>
            <person name="Greff Z."/>
            <person name="Keri G."/>
            <person name="Stemmann O."/>
            <person name="Mann M."/>
        </authorList>
    </citation>
    <scope>PHOSPHORYLATION [LARGE SCALE ANALYSIS] AT SER-868</scope>
    <scope>IDENTIFICATION BY MASS SPECTROMETRY [LARGE SCALE ANALYSIS]</scope>
    <source>
        <tissue>Cervix carcinoma</tissue>
    </source>
</reference>
<reference key="9">
    <citation type="journal article" date="2008" name="Proc. Natl. Acad. Sci. U.S.A.">
        <title>A quantitative atlas of mitotic phosphorylation.</title>
        <authorList>
            <person name="Dephoure N."/>
            <person name="Zhou C."/>
            <person name="Villen J."/>
            <person name="Beausoleil S.A."/>
            <person name="Bakalarski C.E."/>
            <person name="Elledge S.J."/>
            <person name="Gygi S.P."/>
        </authorList>
    </citation>
    <scope>PHOSPHORYLATION [LARGE SCALE ANALYSIS] AT SER-46; SER-67; SER-74; SER-78; THR-109; SER-110; SER-532 AND SER-534</scope>
    <scope>IDENTIFICATION BY MASS SPECTROMETRY [LARGE SCALE ANALYSIS]</scope>
    <source>
        <tissue>Cervix carcinoma</tissue>
    </source>
</reference>
<reference key="10">
    <citation type="journal article" date="2009" name="Anal. Chem.">
        <title>Lys-N and trypsin cover complementary parts of the phosphoproteome in a refined SCX-based approach.</title>
        <authorList>
            <person name="Gauci S."/>
            <person name="Helbig A.O."/>
            <person name="Slijper M."/>
            <person name="Krijgsveld J."/>
            <person name="Heck A.J."/>
            <person name="Mohammed S."/>
        </authorList>
    </citation>
    <scope>IDENTIFICATION BY MASS SPECTROMETRY [LARGE SCALE ANALYSIS]</scope>
</reference>
<reference key="11">
    <citation type="journal article" date="2009" name="Mol. Cell. Proteomics">
        <title>Large-scale proteomics analysis of the human kinome.</title>
        <authorList>
            <person name="Oppermann F.S."/>
            <person name="Gnad F."/>
            <person name="Olsen J.V."/>
            <person name="Hornberger R."/>
            <person name="Greff Z."/>
            <person name="Keri G."/>
            <person name="Mann M."/>
            <person name="Daub H."/>
        </authorList>
    </citation>
    <scope>IDENTIFICATION BY MASS SPECTROMETRY [LARGE SCALE ANALYSIS]</scope>
</reference>
<reference key="12">
    <citation type="journal article" date="2009" name="Sci. Signal.">
        <title>Quantitative phosphoproteomic analysis of T cell receptor signaling reveals system-wide modulation of protein-protein interactions.</title>
        <authorList>
            <person name="Mayya V."/>
            <person name="Lundgren D.H."/>
            <person name="Hwang S.-I."/>
            <person name="Rezaul K."/>
            <person name="Wu L."/>
            <person name="Eng J.K."/>
            <person name="Rodionov V."/>
            <person name="Han D.K."/>
        </authorList>
    </citation>
    <scope>PHOSPHORYLATION [LARGE SCALE ANALYSIS] AT SER-46</scope>
    <scope>IDENTIFICATION BY MASS SPECTROMETRY [LARGE SCALE ANALYSIS]</scope>
    <source>
        <tissue>Leukemic T-cell</tissue>
    </source>
</reference>
<reference key="13">
    <citation type="journal article" date="2009" name="Science">
        <title>Lysine acetylation targets protein complexes and co-regulates major cellular functions.</title>
        <authorList>
            <person name="Choudhary C."/>
            <person name="Kumar C."/>
            <person name="Gnad F."/>
            <person name="Nielsen M.L."/>
            <person name="Rehman M."/>
            <person name="Walther T.C."/>
            <person name="Olsen J.V."/>
            <person name="Mann M."/>
        </authorList>
    </citation>
    <scope>IDENTIFICATION BY MASS SPECTROMETRY [LARGE SCALE ANALYSIS]</scope>
</reference>
<reference key="14">
    <citation type="journal article" date="2010" name="Sci. Signal.">
        <title>Quantitative phosphoproteomics reveals widespread full phosphorylation site occupancy during mitosis.</title>
        <authorList>
            <person name="Olsen J.V."/>
            <person name="Vermeulen M."/>
            <person name="Santamaria A."/>
            <person name="Kumar C."/>
            <person name="Miller M.L."/>
            <person name="Jensen L.J."/>
            <person name="Gnad F."/>
            <person name="Cox J."/>
            <person name="Jensen T.S."/>
            <person name="Nigg E.A."/>
            <person name="Brunak S."/>
            <person name="Mann M."/>
        </authorList>
    </citation>
    <scope>PHOSPHORYLATION [LARGE SCALE ANALYSIS] AT SER-46; SER-74; SER-78; SER-83; THR-162; SER-534; SER-536; SER-842; SER-868 AND SER-893</scope>
    <scope>IDENTIFICATION BY MASS SPECTROMETRY [LARGE SCALE ANALYSIS]</scope>
    <source>
        <tissue>Cervix carcinoma</tissue>
    </source>
</reference>
<reference key="15">
    <citation type="journal article" date="2011" name="BMC Syst. Biol.">
        <title>Initial characterization of the human central proteome.</title>
        <authorList>
            <person name="Burkard T.R."/>
            <person name="Planyavsky M."/>
            <person name="Kaupe I."/>
            <person name="Breitwieser F.P."/>
            <person name="Buerckstuemmer T."/>
            <person name="Bennett K.L."/>
            <person name="Superti-Furga G."/>
            <person name="Colinge J."/>
        </authorList>
    </citation>
    <scope>IDENTIFICATION BY MASS SPECTROMETRY [LARGE SCALE ANALYSIS]</scope>
</reference>
<reference key="16">
    <citation type="journal article" date="2011" name="Sci. Signal.">
        <title>System-wide temporal characterization of the proteome and phosphoproteome of human embryonic stem cell differentiation.</title>
        <authorList>
            <person name="Rigbolt K.T."/>
            <person name="Prokhorova T.A."/>
            <person name="Akimov V."/>
            <person name="Henningsen J."/>
            <person name="Johansen P.T."/>
            <person name="Kratchmarova I."/>
            <person name="Kassem M."/>
            <person name="Mann M."/>
            <person name="Olsen J.V."/>
            <person name="Blagoev B."/>
        </authorList>
    </citation>
    <scope>ACETYLATION [LARGE SCALE ANALYSIS] AT MET-1</scope>
    <scope>PHOSPHORYLATION [LARGE SCALE ANALYSIS] AT SER-6; SER-46; SER-78; SER-83; SER-173; SER-534; SER-536; SER-842; SER-868; SER-893 AND SER-896</scope>
    <scope>IDENTIFICATION BY MASS SPECTROMETRY [LARGE SCALE ANALYSIS]</scope>
</reference>
<reference key="17">
    <citation type="journal article" date="2013" name="J. Proteome Res.">
        <title>Toward a comprehensive characterization of a human cancer cell phosphoproteome.</title>
        <authorList>
            <person name="Zhou H."/>
            <person name="Di Palma S."/>
            <person name="Preisinger C."/>
            <person name="Peng M."/>
            <person name="Polat A.N."/>
            <person name="Heck A.J."/>
            <person name="Mohammed S."/>
        </authorList>
    </citation>
    <scope>PHOSPHORYLATION [LARGE SCALE ANALYSIS] AT SER-6; SER-46; SER-67; SER-74; SER-78; SER-83; SER-118; THR-162; SER-173; SER-179; SER-487; SER-532; SER-534; SER-536; SER-842 AND SER-868</scope>
    <scope>IDENTIFICATION BY MASS SPECTROMETRY [LARGE SCALE ANALYSIS]</scope>
    <source>
        <tissue>Cervix carcinoma</tissue>
        <tissue>Erythroleukemia</tissue>
    </source>
</reference>
<reference key="18">
    <citation type="journal article" date="2014" name="J. Proteomics">
        <title>An enzyme assisted RP-RPLC approach for in-depth analysis of human liver phosphoproteome.</title>
        <authorList>
            <person name="Bian Y."/>
            <person name="Song C."/>
            <person name="Cheng K."/>
            <person name="Dong M."/>
            <person name="Wang F."/>
            <person name="Huang J."/>
            <person name="Sun D."/>
            <person name="Wang L."/>
            <person name="Ye M."/>
            <person name="Zou H."/>
        </authorList>
    </citation>
    <scope>PHOSPHORYLATION [LARGE SCALE ANALYSIS] AT SER-34; SER-46; SER-53; SER-534 AND SER-842</scope>
    <scope>IDENTIFICATION BY MASS SPECTROMETRY [LARGE SCALE ANALYSIS]</scope>
    <source>
        <tissue>Liver</tissue>
    </source>
</reference>
<reference key="19">
    <citation type="journal article" date="2014" name="Nat. Struct. Mol. Biol.">
        <title>Uncovering global SUMOylation signaling networks in a site-specific manner.</title>
        <authorList>
            <person name="Hendriks I.A."/>
            <person name="D'Souza R.C."/>
            <person name="Yang B."/>
            <person name="Verlaan-de Vries M."/>
            <person name="Mann M."/>
            <person name="Vertegaal A.C."/>
        </authorList>
    </citation>
    <scope>SUMOYLATION [LARGE SCALE ANALYSIS] AT LYS-622 AND LYS-766</scope>
    <scope>IDENTIFICATION BY MASS SPECTROMETRY [LARGE SCALE ANALYSIS]</scope>
</reference>
<reference key="20">
    <citation type="journal article" date="2015" name="Mol. Cell. Proteomics">
        <title>System-wide analysis of SUMOylation dynamics in response to replication stress reveals novel small ubiquitin-like modified target proteins and acceptor lysines relevant for genome stability.</title>
        <authorList>
            <person name="Xiao Z."/>
            <person name="Chang J.G."/>
            <person name="Hendriks I.A."/>
            <person name="Sigurdsson J.O."/>
            <person name="Olsen J.V."/>
            <person name="Vertegaal A.C."/>
        </authorList>
    </citation>
    <scope>SUMOYLATION [LARGE SCALE ANALYSIS] AT LYS-622 AND LYS-817</scope>
    <scope>IDENTIFICATION BY MASS SPECTROMETRY [LARGE SCALE ANALYSIS]</scope>
</reference>
<reference key="21">
    <citation type="journal article" date="2016" name="Mol. Cell">
        <title>Identification of a nuclear exosome decay pathway for processed transcripts.</title>
        <authorList>
            <person name="Meola N."/>
            <person name="Domanski M."/>
            <person name="Karadoulama E."/>
            <person name="Chen Y."/>
            <person name="Gentil C."/>
            <person name="Pultz D."/>
            <person name="Vitting-Seerup K."/>
            <person name="Lykke-Andersen S."/>
            <person name="Andersen J.S."/>
            <person name="Sandelin A."/>
            <person name="Jensen T.H."/>
        </authorList>
    </citation>
    <scope>INTERACTION WITH ZFC3H1</scope>
</reference>
<reference key="22">
    <citation type="journal article" date="2017" name="Nat. Struct. Mol. Biol.">
        <title>Site-specific mapping of the human SUMO proteome reveals co-modification with phosphorylation.</title>
        <authorList>
            <person name="Hendriks I.A."/>
            <person name="Lyon D."/>
            <person name="Young C."/>
            <person name="Jensen L.J."/>
            <person name="Vertegaal A.C."/>
            <person name="Nielsen M.L."/>
        </authorList>
    </citation>
    <scope>SUMOYLATION [LARGE SCALE ANALYSIS] AT LYS-510; LYS-622; LYS-661; LYS-766; LYS-817 AND LYS-908</scope>
    <scope>IDENTIFICATION BY MASS SPECTROMETRY [LARGE SCALE ANALYSIS]</scope>
</reference>
<feature type="chain" id="PRO_0000311242" description="Zinc finger CCCH domain-containing protein 18">
    <location>
        <begin position="1"/>
        <end position="953"/>
    </location>
</feature>
<feature type="zinc finger region" description="C3H1-type" evidence="5">
    <location>
        <begin position="219"/>
        <end position="245"/>
    </location>
</feature>
<feature type="region of interest" description="Disordered" evidence="6">
    <location>
        <begin position="1"/>
        <end position="222"/>
    </location>
</feature>
<feature type="region of interest" description="Disordered" evidence="6">
    <location>
        <begin position="391"/>
        <end position="928"/>
    </location>
</feature>
<feature type="coiled-coil region" evidence="4">
    <location>
        <begin position="105"/>
        <end position="134"/>
    </location>
</feature>
<feature type="coiled-coil region" evidence="4">
    <location>
        <begin position="399"/>
        <end position="464"/>
    </location>
</feature>
<feature type="coiled-coil region" evidence="4">
    <location>
        <begin position="921"/>
        <end position="950"/>
    </location>
</feature>
<feature type="compositionally biased region" description="Basic and acidic residues" evidence="6">
    <location>
        <begin position="1"/>
        <end position="14"/>
    </location>
</feature>
<feature type="compositionally biased region" description="Acidic residues" evidence="6">
    <location>
        <begin position="15"/>
        <end position="26"/>
    </location>
</feature>
<feature type="compositionally biased region" description="Acidic residues" evidence="6">
    <location>
        <begin position="60"/>
        <end position="72"/>
    </location>
</feature>
<feature type="compositionally biased region" description="Acidic residues" evidence="6">
    <location>
        <begin position="97"/>
        <end position="106"/>
    </location>
</feature>
<feature type="compositionally biased region" description="Basic and acidic residues" evidence="6">
    <location>
        <begin position="107"/>
        <end position="124"/>
    </location>
</feature>
<feature type="compositionally biased region" description="Acidic residues" evidence="6">
    <location>
        <begin position="125"/>
        <end position="136"/>
    </location>
</feature>
<feature type="compositionally biased region" description="Acidic residues" evidence="6">
    <location>
        <begin position="143"/>
        <end position="158"/>
    </location>
</feature>
<feature type="compositionally biased region" description="Basic and acidic residues" evidence="6">
    <location>
        <begin position="159"/>
        <end position="168"/>
    </location>
</feature>
<feature type="compositionally biased region" description="Basic and acidic residues" evidence="6">
    <location>
        <begin position="175"/>
        <end position="190"/>
    </location>
</feature>
<feature type="compositionally biased region" description="Acidic residues" evidence="6">
    <location>
        <begin position="191"/>
        <end position="207"/>
    </location>
</feature>
<feature type="compositionally biased region" description="Basic and acidic residues" evidence="6">
    <location>
        <begin position="208"/>
        <end position="217"/>
    </location>
</feature>
<feature type="compositionally biased region" description="Basic and acidic residues" evidence="6">
    <location>
        <begin position="396"/>
        <end position="482"/>
    </location>
</feature>
<feature type="compositionally biased region" description="Basic and acidic residues" evidence="6">
    <location>
        <begin position="510"/>
        <end position="520"/>
    </location>
</feature>
<feature type="compositionally biased region" description="Low complexity" evidence="6">
    <location>
        <begin position="545"/>
        <end position="606"/>
    </location>
</feature>
<feature type="compositionally biased region" description="Basic and acidic residues" evidence="6">
    <location>
        <begin position="661"/>
        <end position="670"/>
    </location>
</feature>
<feature type="compositionally biased region" description="Low complexity" evidence="6">
    <location>
        <begin position="692"/>
        <end position="725"/>
    </location>
</feature>
<feature type="compositionally biased region" description="Low complexity" evidence="6">
    <location>
        <begin position="736"/>
        <end position="750"/>
    </location>
</feature>
<feature type="compositionally biased region" description="Basic and acidic residues" evidence="6">
    <location>
        <begin position="760"/>
        <end position="774"/>
    </location>
</feature>
<feature type="compositionally biased region" description="Low complexity" evidence="6">
    <location>
        <begin position="778"/>
        <end position="798"/>
    </location>
</feature>
<feature type="compositionally biased region" description="Basic and acidic residues" evidence="6">
    <location>
        <begin position="824"/>
        <end position="841"/>
    </location>
</feature>
<feature type="compositionally biased region" description="Low complexity" evidence="6">
    <location>
        <begin position="893"/>
        <end position="906"/>
    </location>
</feature>
<feature type="compositionally biased region" description="Polar residues" evidence="6">
    <location>
        <begin position="916"/>
        <end position="925"/>
    </location>
</feature>
<feature type="modified residue" description="N-acetylmethionine" evidence="18">
    <location>
        <position position="1"/>
    </location>
</feature>
<feature type="modified residue" description="Phosphoserine" evidence="18 19">
    <location>
        <position position="6"/>
    </location>
</feature>
<feature type="modified residue" description="Phosphoserine" evidence="20">
    <location>
        <position position="34"/>
    </location>
</feature>
<feature type="modified residue" description="Phosphoserine" evidence="12 13 15 16 17 18 19 20">
    <location>
        <position position="46"/>
    </location>
</feature>
<feature type="modified residue" description="Phosphoserine" evidence="20">
    <location>
        <position position="53"/>
    </location>
</feature>
<feature type="modified residue" description="Phosphoserine" evidence="3">
    <location>
        <position position="59"/>
    </location>
</feature>
<feature type="modified residue" description="Phosphoserine" evidence="13 19">
    <location>
        <position position="67"/>
    </location>
</feature>
<feature type="modified residue" description="Phosphoserine" evidence="13 17 19">
    <location>
        <position position="74"/>
    </location>
</feature>
<feature type="modified residue" description="Phosphoserine" evidence="12 13 17 18 19">
    <location>
        <position position="78"/>
    </location>
</feature>
<feature type="modified residue" description="Phosphoserine" evidence="12 17 18 19">
    <location>
        <position position="83"/>
    </location>
</feature>
<feature type="modified residue" description="Phosphoserine" evidence="2">
    <location>
        <position position="95"/>
    </location>
</feature>
<feature type="modified residue" description="Phosphothreonine" evidence="13">
    <location>
        <position position="109"/>
    </location>
</feature>
<feature type="modified residue" description="Phosphoserine" evidence="13">
    <location>
        <position position="110"/>
    </location>
</feature>
<feature type="modified residue" description="Phosphoserine" evidence="19">
    <location>
        <position position="118"/>
    </location>
</feature>
<feature type="modified residue" description="Phosphothreonine" evidence="17 19">
    <location>
        <position position="162"/>
    </location>
</feature>
<feature type="modified residue" description="Phosphoserine" evidence="18 19">
    <location>
        <position position="173"/>
    </location>
</feature>
<feature type="modified residue" description="Phosphoserine" evidence="19">
    <location>
        <position position="179"/>
    </location>
</feature>
<feature type="modified residue" description="Phosphoserine" evidence="19">
    <location>
        <position position="487"/>
    </location>
</feature>
<feature type="modified residue" description="Phosphoserine" evidence="11 13 19">
    <location>
        <position position="532"/>
    </location>
</feature>
<feature type="modified residue" description="Phosphoserine" evidence="11 13 17 18 19 20">
    <location>
        <position position="534"/>
    </location>
</feature>
<feature type="modified residue" description="Phosphoserine" evidence="17 18 19">
    <location>
        <position position="536"/>
    </location>
</feature>
<feature type="modified residue" description="N6-acetyllysine" evidence="2">
    <location>
        <position position="814"/>
    </location>
</feature>
<feature type="modified residue" description="Phosphoserine" evidence="17 18 19 20">
    <location>
        <position position="842"/>
    </location>
</feature>
<feature type="modified residue" description="Phosphoserine" evidence="2">
    <location>
        <position position="852"/>
    </location>
</feature>
<feature type="modified residue" description="Phosphoserine" evidence="12 14 17 18 19">
    <location>
        <position position="868"/>
    </location>
</feature>
<feature type="modified residue" description="Phosphoserine" evidence="12 17 18">
    <location>
        <position position="893"/>
    </location>
</feature>
<feature type="modified residue" description="Phosphoserine" evidence="18">
    <location>
        <position position="896"/>
    </location>
</feature>
<feature type="cross-link" description="Glycyl lysine isopeptide (Lys-Gly) (interchain with G-Cter in SUMO2)" evidence="23">
    <location>
        <position position="510"/>
    </location>
</feature>
<feature type="cross-link" description="Glycyl lysine isopeptide (Lys-Gly) (interchain with G-Cter in SUMO2)" evidence="21 22 23">
    <location>
        <position position="622"/>
    </location>
</feature>
<feature type="cross-link" description="Glycyl lysine isopeptide (Lys-Gly) (interchain with G-Cter in SUMO2)" evidence="23">
    <location>
        <position position="661"/>
    </location>
</feature>
<feature type="cross-link" description="Glycyl lysine isopeptide (Lys-Gly) (interchain with G-Cter in SUMO2)" evidence="21 23">
    <location>
        <position position="766"/>
    </location>
</feature>
<feature type="cross-link" description="Glycyl lysine isopeptide (Lys-Gly) (interchain with G-Cter in SUMO2)" evidence="22 23">
    <location>
        <position position="817"/>
    </location>
</feature>
<feature type="cross-link" description="Glycyl lysine isopeptide (Lys-Gly) (interchain with G-Cter in SUMO2)" evidence="23">
    <location>
        <position position="908"/>
    </location>
</feature>
<feature type="sequence variant" id="VAR_037188" description="In dbSNP:rs34808360.">
    <original>A</original>
    <variation>T</variation>
    <location>
        <position position="368"/>
    </location>
</feature>
<feature type="sequence variant" id="VAR_037189" description="In dbSNP:rs17855686." evidence="7">
    <original>R</original>
    <variation>H</variation>
    <location>
        <position position="440"/>
    </location>
</feature>
<feature type="sequence conflict" description="In Ref. 1; BAB71237." evidence="9" ref="1">
    <original>Y</original>
    <variation>H</variation>
    <location>
        <position position="251"/>
    </location>
</feature>
<organism>
    <name type="scientific">Homo sapiens</name>
    <name type="common">Human</name>
    <dbReference type="NCBI Taxonomy" id="9606"/>
    <lineage>
        <taxon>Eukaryota</taxon>
        <taxon>Metazoa</taxon>
        <taxon>Chordata</taxon>
        <taxon>Craniata</taxon>
        <taxon>Vertebrata</taxon>
        <taxon>Euteleostomi</taxon>
        <taxon>Mammalia</taxon>
        <taxon>Eutheria</taxon>
        <taxon>Euarchontoglires</taxon>
        <taxon>Primates</taxon>
        <taxon>Haplorrhini</taxon>
        <taxon>Catarrhini</taxon>
        <taxon>Hominidae</taxon>
        <taxon>Homo</taxon>
    </lineage>
</organism>
<gene>
    <name evidence="10" type="primary">ZC3H18</name>
    <name type="synonym">NHN1</name>
</gene>